<protein>
    <recommendedName>
        <fullName evidence="5">Ascaroside receptor GPR2</fullName>
    </recommendedName>
</protein>
<feature type="chain" id="PRO_0000462167" description="Ascaroside receptor GPR2">
    <location>
        <begin position="1"/>
        <end position="406"/>
    </location>
</feature>
<feature type="topological domain" description="Extracellular" evidence="5">
    <location>
        <begin position="1"/>
        <end position="29"/>
    </location>
</feature>
<feature type="transmembrane region" description="Helical" evidence="1">
    <location>
        <begin position="30"/>
        <end position="50"/>
    </location>
</feature>
<feature type="topological domain" description="Cytoplasmic" evidence="5">
    <location>
        <begin position="51"/>
        <end position="61"/>
    </location>
</feature>
<feature type="transmembrane region" description="Helical" evidence="1">
    <location>
        <begin position="62"/>
        <end position="82"/>
    </location>
</feature>
<feature type="topological domain" description="Extracellular" evidence="5">
    <location>
        <begin position="83"/>
        <end position="107"/>
    </location>
</feature>
<feature type="transmembrane region" description="Helical" evidence="1">
    <location>
        <begin position="108"/>
        <end position="128"/>
    </location>
</feature>
<feature type="topological domain" description="Cytoplasmic" evidence="5">
    <location>
        <begin position="129"/>
        <end position="143"/>
    </location>
</feature>
<feature type="transmembrane region" description="Helical" evidence="1">
    <location>
        <begin position="144"/>
        <end position="164"/>
    </location>
</feature>
<feature type="topological domain" description="Extracellular" evidence="5">
    <location>
        <begin position="165"/>
        <end position="185"/>
    </location>
</feature>
<feature type="transmembrane region" description="Helical" evidence="1">
    <location>
        <begin position="186"/>
        <end position="206"/>
    </location>
</feature>
<feature type="topological domain" description="Cytoplasmic" evidence="5">
    <location>
        <begin position="207"/>
        <end position="326"/>
    </location>
</feature>
<feature type="transmembrane region" description="Helical" evidence="1">
    <location>
        <begin position="327"/>
        <end position="347"/>
    </location>
</feature>
<feature type="topological domain" description="Extracellular" evidence="5">
    <location>
        <begin position="348"/>
        <end position="356"/>
    </location>
</feature>
<feature type="transmembrane region" description="Helical" evidence="1">
    <location>
        <begin position="357"/>
        <end position="377"/>
    </location>
</feature>
<feature type="topological domain" description="Cytoplasmic" evidence="5">
    <location>
        <begin position="378"/>
        <end position="406"/>
    </location>
</feature>
<feature type="disulfide bond" evidence="2">
    <location>
        <begin position="99"/>
        <end position="173"/>
    </location>
</feature>
<sequence length="406" mass="44888">MTQLPYLLDRRGGALAAPATAWGDMMLNRALFSVALLSSVGSAWVVLSYACIKELRSYRHQLILGLAISDLLMSLNFMFSAGWNVAGGDLALEESRTACSVNGFLTQVFVVQTDWWILVIAIATYIILGNFKTQSQFIQTHVWIPWVGPWVLSIIIAAICHGVLGYGYIGGWCWLTSDLMRLLINFIPRWLIVIAIALIYIRLYMIVRKARKWDIEGVSPDPGDDMADTSVILMSVGKKDRERQGSGVLVSRDVSVSFGRKGSTAPTFVTMVTTSGAGDSREAISSCSAREEGSRARTVNVNSSRSLSLGMRQPLNAAQLKRIAKKMMVYPVAYAIIWACPTAIRIYQGTTGSRAPLWITIVDKSCIVIQGLVDAVVYGLNERAWQGWRDHIRRIIYKNEGGRIIG</sequence>
<evidence type="ECO:0000255" key="1"/>
<evidence type="ECO:0000255" key="2">
    <source>
        <dbReference type="PROSITE-ProRule" id="PRU00521"/>
    </source>
</evidence>
<evidence type="ECO:0000269" key="3">
    <source>
    </source>
</evidence>
<evidence type="ECO:0000303" key="4">
    <source>
    </source>
</evidence>
<evidence type="ECO:0000305" key="5"/>
<evidence type="ECO:0000312" key="6">
    <source>
        <dbReference type="EMBL" id="EGX50174.1"/>
    </source>
</evidence>
<evidence type="ECO:0000312" key="7">
    <source>
        <dbReference type="Proteomes" id="UP000008784"/>
    </source>
</evidence>
<proteinExistence type="evidence at protein level"/>
<dbReference type="EMBL" id="ADOT01000125">
    <property type="protein sequence ID" value="EGX50174.1"/>
    <property type="molecule type" value="Genomic_DNA"/>
</dbReference>
<dbReference type="RefSeq" id="XP_011121104.1">
    <property type="nucleotide sequence ID" value="XM_011122802.1"/>
</dbReference>
<dbReference type="STRING" id="756982.G1X9E2"/>
<dbReference type="GeneID" id="22892008"/>
<dbReference type="eggNOG" id="ENOG502RZ52">
    <property type="taxonomic scope" value="Eukaryota"/>
</dbReference>
<dbReference type="HOGENOM" id="CLU_052065_0_0_1"/>
<dbReference type="InParanoid" id="G1X9E2"/>
<dbReference type="OMA" id="FYSPDMT"/>
<dbReference type="OrthoDB" id="1778475at2759"/>
<dbReference type="Proteomes" id="UP000008784">
    <property type="component" value="Unassembled WGS sequence"/>
</dbReference>
<dbReference type="GO" id="GO:0005886">
    <property type="term" value="C:plasma membrane"/>
    <property type="evidence" value="ECO:0007669"/>
    <property type="project" value="UniProtKB-SubCell"/>
</dbReference>
<dbReference type="GO" id="GO:0004930">
    <property type="term" value="F:G protein-coupled receptor activity"/>
    <property type="evidence" value="ECO:0007669"/>
    <property type="project" value="TreeGrafter"/>
</dbReference>
<dbReference type="GO" id="GO:0007189">
    <property type="term" value="P:adenylate cyclase-activating G protein-coupled receptor signaling pathway"/>
    <property type="evidence" value="ECO:0007669"/>
    <property type="project" value="TreeGrafter"/>
</dbReference>
<dbReference type="GO" id="GO:0007166">
    <property type="term" value="P:cell surface receptor signaling pathway"/>
    <property type="evidence" value="ECO:0007669"/>
    <property type="project" value="InterPro"/>
</dbReference>
<dbReference type="Gene3D" id="1.20.1070.10">
    <property type="entry name" value="Rhodopsin 7-helix transmembrane proteins"/>
    <property type="match status" value="1"/>
</dbReference>
<dbReference type="InterPro" id="IPR022343">
    <property type="entry name" value="GCR1-cAMP_receptor"/>
</dbReference>
<dbReference type="InterPro" id="IPR023041">
    <property type="entry name" value="Glucose_rcpt_Git3_N"/>
</dbReference>
<dbReference type="InterPro" id="IPR017981">
    <property type="entry name" value="GPCR_2-like_7TM"/>
</dbReference>
<dbReference type="InterPro" id="IPR017452">
    <property type="entry name" value="GPCR_Rhodpsn_7TM"/>
</dbReference>
<dbReference type="InterPro" id="IPR022596">
    <property type="entry name" value="GPR1_C"/>
</dbReference>
<dbReference type="PANTHER" id="PTHR23112">
    <property type="entry name" value="G PROTEIN-COUPLED RECEPTOR 157-RELATED"/>
    <property type="match status" value="1"/>
</dbReference>
<dbReference type="PANTHER" id="PTHR23112:SF0">
    <property type="entry name" value="TRANSMEMBRANE PROTEIN 116"/>
    <property type="match status" value="1"/>
</dbReference>
<dbReference type="Pfam" id="PF11710">
    <property type="entry name" value="Git3"/>
    <property type="match status" value="1"/>
</dbReference>
<dbReference type="Pfam" id="PF11970">
    <property type="entry name" value="GPR_Gpa2_C"/>
    <property type="match status" value="1"/>
</dbReference>
<dbReference type="PRINTS" id="PR02001">
    <property type="entry name" value="GCR1CAMPR"/>
</dbReference>
<dbReference type="SUPFAM" id="SSF81321">
    <property type="entry name" value="Family A G protein-coupled receptor-like"/>
    <property type="match status" value="1"/>
</dbReference>
<dbReference type="PROSITE" id="PS50262">
    <property type="entry name" value="G_PROTEIN_RECEP_F1_2"/>
    <property type="match status" value="1"/>
</dbReference>
<dbReference type="PROSITE" id="PS50261">
    <property type="entry name" value="G_PROTEIN_RECEP_F2_4"/>
    <property type="match status" value="1"/>
</dbReference>
<gene>
    <name evidence="4" type="primary">GPR2</name>
    <name evidence="6" type="ORF">AOL_s00076g249</name>
</gene>
<comment type="function">
    <text evidence="3">G protein-coupled receptor that senses nematode ascaroside pheromones and signals via adenylate cyclase to positively regulate trap formation for nematode capture.</text>
</comment>
<comment type="subunit">
    <text evidence="3">Interacts with ascaroside receptor GPR3; may form a functional heterodimer (PubMed:38649409). Interacts with guanine nucleotide-binding protein alpha GPA2; to activate adenylate cyclase and positively regulate nematode trap formation (PubMed:38649409).</text>
</comment>
<comment type="subcellular location">
    <subcellularLocation>
        <location evidence="3">Cell membrane</location>
        <topology evidence="1">Multi-pass membrane protein</topology>
    </subcellularLocation>
    <text evidence="3">Relocalizes to the vacuole following stimulation by ligand.</text>
</comment>
<comment type="induction">
    <text evidence="3">Induced following nematode exposure.</text>
</comment>
<comment type="disruption phenotype">
    <text evidence="3">Decreases cAMP levels following exposure to C.elegans (PubMed:38649409). Decreases trap formation following exposure to C.elegans ascarosides ascr#3 and ascr#7 (PubMed:38649409).</text>
</comment>
<comment type="similarity">
    <text evidence="5">Belongs to the G-protein coupled receptor 1 family.</text>
</comment>
<organism evidence="7">
    <name type="scientific">Arthrobotrys oligospora (strain ATCC 24927 / CBS 115.81 / DSM 1491)</name>
    <name type="common">Nematode-trapping fungus</name>
    <name type="synonym">Didymozoophaga oligospora</name>
    <dbReference type="NCBI Taxonomy" id="756982"/>
    <lineage>
        <taxon>Eukaryota</taxon>
        <taxon>Fungi</taxon>
        <taxon>Dikarya</taxon>
        <taxon>Ascomycota</taxon>
        <taxon>Pezizomycotina</taxon>
        <taxon>Orbiliomycetes</taxon>
        <taxon>Orbiliales</taxon>
        <taxon>Orbiliaceae</taxon>
        <taxon>Orbilia</taxon>
        <taxon>Orbilia oligospora</taxon>
    </lineage>
</organism>
<reference evidence="7" key="1">
    <citation type="journal article" date="2011" name="PLoS Pathog.">
        <title>Genomic and proteomic analyses of the fungus Arthrobotrys oligospora provide insights into nematode-trap formation.</title>
        <authorList>
            <person name="Yang J."/>
            <person name="Wang L."/>
            <person name="Ji X."/>
            <person name="Feng Y."/>
            <person name="Li X."/>
            <person name="Zou C."/>
            <person name="Xu J."/>
            <person name="Ren Y."/>
            <person name="Mi Q."/>
            <person name="Wu J."/>
            <person name="Liu S."/>
            <person name="Liu Y."/>
            <person name="Huang X."/>
            <person name="Wang H."/>
            <person name="Niu X."/>
            <person name="Li J."/>
            <person name="Liang L."/>
            <person name="Luo Y."/>
            <person name="Ji K."/>
            <person name="Zhou W."/>
            <person name="Yu Z."/>
            <person name="Li G."/>
            <person name="Liu Y."/>
            <person name="Li L."/>
            <person name="Qiao M."/>
            <person name="Feng L."/>
            <person name="Zhang K.-Q."/>
        </authorList>
    </citation>
    <scope>NUCLEOTIDE SEQUENCE [LARGE SCALE GENOMIC DNA]</scope>
    <source>
        <strain evidence="7">ATCC 24927 / CBS 115.81 / DSM 1491</strain>
    </source>
</reference>
<reference evidence="5" key="2">
    <citation type="journal article" date="2024" name="Nat. Microbiol.">
        <title>The nematode-trapping fungus Arthrobotrys oligospora detects prey pheromones via G protein-coupled receptors.</title>
        <authorList>
            <person name="Kuo C.Y."/>
            <person name="Tay R.J."/>
            <person name="Lin H.C."/>
            <person name="Juan S.C."/>
            <person name="Vidal-Diez de Ulzurrun G."/>
            <person name="Chang Y.C."/>
            <person name="Hoki J."/>
            <person name="Schroeder F.C."/>
            <person name="Hsueh Y.P."/>
        </authorList>
    </citation>
    <scope>FUNCTION</scope>
    <scope>INTERACTION WITH GPA2 AND GPR3</scope>
    <scope>SUBCELLULAR LOCATION</scope>
    <scope>INDUCTION</scope>
    <scope>DISRUPTION PHENOTYPE</scope>
    <source>
        <strain evidence="4">TWF154</strain>
    </source>
</reference>
<accession>G1X9E2</accession>
<keyword id="KW-1003">Cell membrane</keyword>
<keyword id="KW-1015">Disulfide bond</keyword>
<keyword id="KW-0297">G-protein coupled receptor</keyword>
<keyword id="KW-0472">Membrane</keyword>
<keyword id="KW-0675">Receptor</keyword>
<keyword id="KW-1185">Reference proteome</keyword>
<keyword id="KW-0807">Transducer</keyword>
<keyword id="KW-0812">Transmembrane</keyword>
<keyword id="KW-1133">Transmembrane helix</keyword>
<name>GPR2_ARTOA</name>